<gene>
    <name type="primary">PFN2</name>
</gene>
<organism>
    <name type="scientific">Pongo abelii</name>
    <name type="common">Sumatran orangutan</name>
    <name type="synonym">Pongo pygmaeus abelii</name>
    <dbReference type="NCBI Taxonomy" id="9601"/>
    <lineage>
        <taxon>Eukaryota</taxon>
        <taxon>Metazoa</taxon>
        <taxon>Chordata</taxon>
        <taxon>Craniata</taxon>
        <taxon>Vertebrata</taxon>
        <taxon>Euteleostomi</taxon>
        <taxon>Mammalia</taxon>
        <taxon>Eutheria</taxon>
        <taxon>Euarchontoglires</taxon>
        <taxon>Primates</taxon>
        <taxon>Haplorrhini</taxon>
        <taxon>Catarrhini</taxon>
        <taxon>Hominidae</taxon>
        <taxon>Pongo</taxon>
    </lineage>
</organism>
<reference key="1">
    <citation type="submission" date="2004-11" db="EMBL/GenBank/DDBJ databases">
        <authorList>
            <consortium name="The German cDNA consortium"/>
        </authorList>
    </citation>
    <scope>NUCLEOTIDE SEQUENCE [LARGE SCALE MRNA] (ISOFORMS 1 AND 2)</scope>
    <source>
        <tissue>Brain cortex</tissue>
        <tissue>Heart</tissue>
        <tissue>Kidney</tissue>
    </source>
</reference>
<proteinExistence type="evidence at transcript level"/>
<accession>Q5R4E2</accession>
<accession>Q5R4Z2</accession>
<accession>Q5R6D9</accession>
<accession>Q5R7C6</accession>
<protein>
    <recommendedName>
        <fullName>Profilin-2</fullName>
    </recommendedName>
    <alternativeName>
        <fullName>Profilin II</fullName>
    </alternativeName>
</protein>
<evidence type="ECO:0000250" key="1"/>
<evidence type="ECO:0000250" key="2">
    <source>
        <dbReference type="UniProtKB" id="P35080"/>
    </source>
</evidence>
<evidence type="ECO:0000250" key="3">
    <source>
        <dbReference type="UniProtKB" id="Q9JJV2"/>
    </source>
</evidence>
<evidence type="ECO:0000303" key="4">
    <source ref="1"/>
</evidence>
<evidence type="ECO:0000305" key="5"/>
<sequence>MAGWQSYVDNLMCDGCCQEAAIVGYCDAKYVWAATAGGVFQSITPIEIDMIVGKDREGFFTNGLTLGAKKCSVIRDSLYVDGDCTMDIRTKSQGGEPTYNVAVGRAGRVLVFVMGKEGVHGGGLNKKAYSMAKYLRDSGF</sequence>
<name>PROF2_PONAB</name>
<comment type="function">
    <text evidence="1">Binds to actin and affects the structure of the cytoskeleton. At high concentrations, profilin prevents the polymerization of actin, whereas it enhances it at low concentrations. By binding to PIP2, it inhibits the formation of IP3 and DG (By similarity).</text>
</comment>
<comment type="subunit">
    <text evidence="2 3">Occurs in many kinds of cells as a complex with monomeric actin in a 1:1 ratio (By similarity). Interacts with PFN2 (By similarity).</text>
</comment>
<comment type="subunit">
    <molecule>Isoform 1</molecule>
    <text evidence="2">Interacts with ACTMAP (via N-terminus); the interaction may facilitate efficient cleavage of the acetylated N-terminus of immature actin by ACTMAP.</text>
</comment>
<comment type="subunit">
    <molecule>Isoform 2</molecule>
    <text evidence="2">Interacts with ACTMAP (via N-terminus); the interaction may facilitate efficient cleavage of the acetylated N-terminus of immature actin by ACTMAP.</text>
</comment>
<comment type="subcellular location">
    <subcellularLocation>
        <location evidence="1">Cytoplasm</location>
        <location evidence="1">Cytoskeleton</location>
    </subcellularLocation>
</comment>
<comment type="alternative products">
    <event type="alternative splicing"/>
    <isoform>
        <id>Q5R4E2-1</id>
        <name>1</name>
        <sequence type="displayed"/>
    </isoform>
    <isoform>
        <id>Q5R4E2-2</id>
        <name>2</name>
        <sequence type="described" ref="VSP_017822"/>
    </isoform>
</comment>
<comment type="similarity">
    <text evidence="5">Belongs to the profilin family.</text>
</comment>
<feature type="initiator methionine" description="Removed" evidence="2">
    <location>
        <position position="1"/>
    </location>
</feature>
<feature type="chain" id="PRO_0000199577" description="Profilin-2">
    <location>
        <begin position="2"/>
        <end position="140"/>
    </location>
</feature>
<feature type="modified residue" description="N-acetylalanine" evidence="2">
    <location>
        <position position="2"/>
    </location>
</feature>
<feature type="splice variant" id="VSP_017822" description="In isoform 2." evidence="4">
    <original>VLVFVMGKEGVHGGGLNKKAYSMAKYLRDSGF</original>
    <variation>ALVIVMGKEGVHGGTLNKKAYELALYLRRSDV</variation>
    <location>
        <begin position="109"/>
        <end position="140"/>
    </location>
</feature>
<feature type="sequence conflict" description="In Ref. 1; CAH92677." evidence="5" ref="1">
    <original>D</original>
    <variation>G</variation>
    <location>
        <position position="9"/>
    </location>
</feature>
<feature type="sequence conflict" description="In Ref. 1; CAH93174." evidence="5" ref="1">
    <original>L</original>
    <variation>S</variation>
    <location>
        <position position="64"/>
    </location>
</feature>
<keyword id="KW-0007">Acetylation</keyword>
<keyword id="KW-0009">Actin-binding</keyword>
<keyword id="KW-0025">Alternative splicing</keyword>
<keyword id="KW-0963">Cytoplasm</keyword>
<keyword id="KW-0206">Cytoskeleton</keyword>
<keyword id="KW-1185">Reference proteome</keyword>
<dbReference type="EMBL" id="CR858725">
    <property type="protein sequence ID" value="CAH90934.1"/>
    <property type="molecule type" value="mRNA"/>
</dbReference>
<dbReference type="EMBL" id="CR859236">
    <property type="protein sequence ID" value="CAH91416.1"/>
    <property type="molecule type" value="mRNA"/>
</dbReference>
<dbReference type="EMBL" id="CR860192">
    <property type="protein sequence ID" value="CAH92334.1"/>
    <property type="molecule type" value="mRNA"/>
</dbReference>
<dbReference type="EMBL" id="CR860552">
    <property type="protein sequence ID" value="CAH92677.1"/>
    <property type="molecule type" value="mRNA"/>
</dbReference>
<dbReference type="EMBL" id="CR861095">
    <property type="protein sequence ID" value="CAH93174.1"/>
    <property type="molecule type" value="mRNA"/>
</dbReference>
<dbReference type="EMBL" id="CR861308">
    <property type="protein sequence ID" value="CAH93374.1"/>
    <property type="molecule type" value="mRNA"/>
</dbReference>
<dbReference type="RefSeq" id="NP_001126567.2">
    <molecule id="Q5R4E2-1"/>
    <property type="nucleotide sequence ID" value="NM_001133095.2"/>
</dbReference>
<dbReference type="RefSeq" id="NP_001128792.1">
    <molecule id="Q5R4E2-2"/>
    <property type="nucleotide sequence ID" value="NM_001135320.2"/>
</dbReference>
<dbReference type="BMRB" id="Q5R4E2"/>
<dbReference type="SMR" id="Q5R4E2"/>
<dbReference type="FunCoup" id="Q5R4E2">
    <property type="interactions" value="855"/>
</dbReference>
<dbReference type="STRING" id="9601.ENSPPYP00000015884"/>
<dbReference type="GeneID" id="100173558"/>
<dbReference type="KEGG" id="pon:100173558"/>
<dbReference type="CTD" id="5217"/>
<dbReference type="eggNOG" id="KOG1755">
    <property type="taxonomic scope" value="Eukaryota"/>
</dbReference>
<dbReference type="HOGENOM" id="CLU_123405_1_0_1"/>
<dbReference type="InParanoid" id="Q5R4E2"/>
<dbReference type="OrthoDB" id="9485603at2759"/>
<dbReference type="Proteomes" id="UP000001595">
    <property type="component" value="Unplaced"/>
</dbReference>
<dbReference type="GO" id="GO:0005737">
    <property type="term" value="C:cytoplasm"/>
    <property type="evidence" value="ECO:0007669"/>
    <property type="project" value="UniProtKB-KW"/>
</dbReference>
<dbReference type="GO" id="GO:0005856">
    <property type="term" value="C:cytoskeleton"/>
    <property type="evidence" value="ECO:0007669"/>
    <property type="project" value="UniProtKB-SubCell"/>
</dbReference>
<dbReference type="GO" id="GO:0003779">
    <property type="term" value="F:actin binding"/>
    <property type="evidence" value="ECO:0007669"/>
    <property type="project" value="UniProtKB-KW"/>
</dbReference>
<dbReference type="GO" id="GO:0030036">
    <property type="term" value="P:actin cytoskeleton organization"/>
    <property type="evidence" value="ECO:0007669"/>
    <property type="project" value="InterPro"/>
</dbReference>
<dbReference type="GO" id="GO:0032233">
    <property type="term" value="P:positive regulation of actin filament bundle assembly"/>
    <property type="evidence" value="ECO:0007669"/>
    <property type="project" value="TreeGrafter"/>
</dbReference>
<dbReference type="GO" id="GO:0030833">
    <property type="term" value="P:regulation of actin filament polymerization"/>
    <property type="evidence" value="ECO:0007669"/>
    <property type="project" value="TreeGrafter"/>
</dbReference>
<dbReference type="CDD" id="cd00148">
    <property type="entry name" value="PROF"/>
    <property type="match status" value="1"/>
</dbReference>
<dbReference type="FunFam" id="3.30.450.30:FF:000006">
    <property type="entry name" value="Profilin"/>
    <property type="match status" value="1"/>
</dbReference>
<dbReference type="Gene3D" id="3.30.450.30">
    <property type="entry name" value="Dynein light chain 2a, cytoplasmic"/>
    <property type="match status" value="1"/>
</dbReference>
<dbReference type="InterPro" id="IPR048278">
    <property type="entry name" value="PFN"/>
</dbReference>
<dbReference type="InterPro" id="IPR005455">
    <property type="entry name" value="PFN_euk"/>
</dbReference>
<dbReference type="InterPro" id="IPR036140">
    <property type="entry name" value="PFN_sf"/>
</dbReference>
<dbReference type="InterPro" id="IPR005454">
    <property type="entry name" value="Profilin1/2/3_vertebrate"/>
</dbReference>
<dbReference type="InterPro" id="IPR027310">
    <property type="entry name" value="Profilin_CS"/>
</dbReference>
<dbReference type="PANTHER" id="PTHR13936">
    <property type="entry name" value="PROFILIN"/>
    <property type="match status" value="1"/>
</dbReference>
<dbReference type="PANTHER" id="PTHR13936:SF15">
    <property type="entry name" value="PROFILIN-2"/>
    <property type="match status" value="1"/>
</dbReference>
<dbReference type="Pfam" id="PF00235">
    <property type="entry name" value="Profilin"/>
    <property type="match status" value="1"/>
</dbReference>
<dbReference type="PRINTS" id="PR00392">
    <property type="entry name" value="PROFILIN"/>
</dbReference>
<dbReference type="PRINTS" id="PR01639">
    <property type="entry name" value="PROFILINMAML"/>
</dbReference>
<dbReference type="SMART" id="SM00392">
    <property type="entry name" value="PROF"/>
    <property type="match status" value="1"/>
</dbReference>
<dbReference type="SUPFAM" id="SSF55770">
    <property type="entry name" value="Profilin (actin-binding protein)"/>
    <property type="match status" value="1"/>
</dbReference>
<dbReference type="PROSITE" id="PS00414">
    <property type="entry name" value="PROFILIN"/>
    <property type="match status" value="1"/>
</dbReference>